<reference key="1">
    <citation type="journal article" date="2006" name="Proc. Natl. Acad. Sci. U.S.A.">
        <title>The products of a single maize sesquiterpene synthase form a volatile defense signal that attracts natural enemies of maize herbivores.</title>
        <authorList>
            <person name="Schnee C."/>
            <person name="Koellner T.G."/>
            <person name="Held M."/>
            <person name="Turlings T.C."/>
            <person name="Gershenzon J."/>
            <person name="Degenhardt J."/>
        </authorList>
    </citation>
    <scope>NUCLEOTIDE SEQUENCE [MRNA]</scope>
    <scope>FUNCTION</scope>
    <scope>INDUCTION BY HERBIVORY</scope>
    <scope>PATHWAY</scope>
    <source>
        <strain>cv. B73</strain>
        <strain>cv. Delprim</strain>
    </source>
</reference>
<reference key="2">
    <citation type="journal article" date="2008" name="Plant Cell">
        <title>A maize (E)-beta-caryophyllene synthase implicated in indirect defense responses against herbivores is not expressed in most American maize varieties.</title>
        <authorList>
            <person name="Koellner T.G.J."/>
            <person name="Held M."/>
            <person name="Lenk C."/>
            <person name="Hiltpold I."/>
            <person name="Turlings T.C."/>
            <person name="Gershenzon J."/>
            <person name="Degenhardt J."/>
        </authorList>
    </citation>
    <scope>INDUCTION BY HERBIVORES</scope>
    <source>
        <strain>cv. B73</strain>
    </source>
</reference>
<reference key="3">
    <citation type="journal article" date="2009" name="Phytochemistry">
        <title>Molecular and biochemical evolution of maize terpene synthase 10, an enzyme of indirect defense.</title>
        <authorList>
            <person name="Koellner T.G."/>
            <person name="Gershenzon J."/>
            <person name="Degenhardt J."/>
        </authorList>
    </citation>
    <scope>FUNCTION</scope>
    <scope>CATALYTIC ACTIVITY</scope>
    <scope>MUTAGENESIS OF LEU-356</scope>
    <scope>PATHWAY</scope>
</reference>
<reference key="4">
    <citation type="journal article" date="2011" name="J. Chem. Ecol.">
        <title>Attractiveness of constitutive and herbivore-induced sesquiterpene blends of maize to the parasitic wasp Cotesia marginiventris (Cresson).</title>
        <authorList>
            <person name="Fontana A."/>
            <person name="Held M."/>
            <person name="Fantaye C.A."/>
            <person name="Turlings T.C."/>
            <person name="Degenhardt J."/>
            <person name="Gershenzon J."/>
        </authorList>
    </citation>
    <scope>FUNCTION</scope>
    <scope>CATALYTIC ACTIVITY</scope>
</reference>
<reference key="5">
    <citation type="journal article" date="2019" name="Planta">
        <title>Biosynthesis and function of terpenoid defense compounds in maize (Zea mays).</title>
        <authorList>
            <person name="Block A.K."/>
            <person name="Vaughan M.M."/>
            <person name="Schmelz E.A."/>
            <person name="Christensen S.A."/>
        </authorList>
    </citation>
    <scope>REVIEW</scope>
</reference>
<feature type="chain" id="PRO_0000402134" description="(E)-beta-farnesene synthase">
    <location>
        <begin position="1"/>
        <end position="533"/>
    </location>
</feature>
<feature type="short sequence motif" description="DDXXD motif" evidence="1">
    <location>
        <begin position="286"/>
        <end position="290"/>
    </location>
</feature>
<feature type="binding site" evidence="2">
    <location>
        <position position="286"/>
    </location>
    <ligand>
        <name>Mg(2+)</name>
        <dbReference type="ChEBI" id="CHEBI:18420"/>
        <label>1</label>
    </ligand>
</feature>
<feature type="binding site" evidence="2">
    <location>
        <position position="286"/>
    </location>
    <ligand>
        <name>Mg(2+)</name>
        <dbReference type="ChEBI" id="CHEBI:18420"/>
        <label>2</label>
    </ligand>
</feature>
<feature type="binding site" evidence="1">
    <location>
        <position position="286"/>
    </location>
    <ligand>
        <name>substrate</name>
    </ligand>
</feature>
<feature type="binding site" evidence="2">
    <location>
        <position position="290"/>
    </location>
    <ligand>
        <name>Mg(2+)</name>
        <dbReference type="ChEBI" id="CHEBI:18420"/>
        <label>1</label>
    </ligand>
</feature>
<feature type="binding site" evidence="2">
    <location>
        <position position="290"/>
    </location>
    <ligand>
        <name>Mg(2+)</name>
        <dbReference type="ChEBI" id="CHEBI:18420"/>
        <label>2</label>
    </ligand>
</feature>
<feature type="binding site" evidence="1">
    <location>
        <position position="290"/>
    </location>
    <ligand>
        <name>substrate</name>
    </ligand>
</feature>
<feature type="binding site" evidence="1">
    <location>
        <position position="427"/>
    </location>
    <ligand>
        <name>substrate</name>
    </ligand>
</feature>
<feature type="binding site" evidence="2">
    <location>
        <position position="430"/>
    </location>
    <ligand>
        <name>Mg(2+)</name>
        <dbReference type="ChEBI" id="CHEBI:18420"/>
        <label>3</label>
    </ligand>
</feature>
<feature type="binding site" evidence="1">
    <location>
        <position position="430"/>
    </location>
    <ligand>
        <name>substrate</name>
    </ligand>
</feature>
<feature type="binding site" evidence="2">
    <location>
        <position position="438"/>
    </location>
    <ligand>
        <name>Mg(2+)</name>
        <dbReference type="ChEBI" id="CHEBI:18420"/>
        <label>3</label>
    </ligand>
</feature>
<feature type="sequence variant" description="In strain: cv. Delprim.">
    <original>T</original>
    <variation>K</variation>
    <location>
        <position position="52"/>
    </location>
</feature>
<feature type="sequence variant" description="In strain: cv. Delprim.">
    <original>S</original>
    <variation>T</variation>
    <location>
        <position position="134"/>
    </location>
</feature>
<feature type="sequence variant" description="In strain: cv. Delprim.">
    <original>VRTH</original>
    <variation>LRTQ</variation>
    <location>
        <begin position="141"/>
        <end position="144"/>
    </location>
</feature>
<feature type="sequence variant" description="In strain: cv. Delprim.">
    <original>A</original>
    <variation>AL</variation>
    <location>
        <position position="171"/>
    </location>
</feature>
<feature type="sequence variant" description="In strain: cv. Delprim.">
    <original>H</original>
    <variation>S</variation>
    <location>
        <position position="177"/>
    </location>
</feature>
<feature type="mutagenesis site" description="Decreased production of alpha-bergamotene." evidence="8">
    <original>L</original>
    <variation>F</variation>
    <location>
        <position position="356"/>
    </location>
</feature>
<proteinExistence type="evidence at protein level"/>
<evidence type="ECO:0000250" key="1">
    <source>
        <dbReference type="UniProtKB" id="A0A1C9J6A7"/>
    </source>
</evidence>
<evidence type="ECO:0000250" key="2">
    <source>
        <dbReference type="UniProtKB" id="Q40577"/>
    </source>
</evidence>
<evidence type="ECO:0000250" key="3">
    <source>
        <dbReference type="UniProtKB" id="Q5GJ60"/>
    </source>
</evidence>
<evidence type="ECO:0000250" key="4">
    <source>
        <dbReference type="UniProtKB" id="Q6JD73"/>
    </source>
</evidence>
<evidence type="ECO:0000250" key="5">
    <source>
        <dbReference type="UniProtKB" id="Q6Q3H2"/>
    </source>
</evidence>
<evidence type="ECO:0000269" key="6">
    <source>
    </source>
</evidence>
<evidence type="ECO:0000269" key="7">
    <source>
    </source>
</evidence>
<evidence type="ECO:0000269" key="8">
    <source>
    </source>
</evidence>
<evidence type="ECO:0000269" key="9">
    <source>
    </source>
</evidence>
<evidence type="ECO:0000303" key="10">
    <source>
    </source>
</evidence>
<evidence type="ECO:0000303" key="11">
    <source>
    </source>
</evidence>
<evidence type="ECO:0000305" key="12"/>
<evidence type="ECO:0000305" key="13">
    <source>
    </source>
</evidence>
<dbReference type="EC" id="4.2.3.47" evidence="6 8 9"/>
<dbReference type="EC" id="4.2.3.77" evidence="6"/>
<dbReference type="EC" id="4.2.3.81" evidence="6 8 9"/>
<dbReference type="EC" id="4.2.3.133" evidence="6"/>
<dbReference type="EC" id="4.2.3.125" evidence="6"/>
<dbReference type="EC" id="4.2.3.55" evidence="6 8"/>
<dbReference type="EC" id="4.2.3.57" evidence="6"/>
<dbReference type="EC" id="4.2.3.-" evidence="6 8"/>
<dbReference type="EC" id="4.2.3.123" evidence="6 8"/>
<dbReference type="EC" id="4.2.3.65" evidence="6 8"/>
<dbReference type="EMBL" id="AY928078">
    <property type="protein sequence ID" value="AAX99146.1"/>
    <property type="molecule type" value="mRNA"/>
</dbReference>
<dbReference type="EMBL" id="AY928079">
    <property type="protein sequence ID" value="AAX99147.1"/>
    <property type="molecule type" value="mRNA"/>
</dbReference>
<dbReference type="RefSeq" id="NP_001105850.2">
    <property type="nucleotide sequence ID" value="NM_001112380.2"/>
</dbReference>
<dbReference type="SMR" id="Q2NM15"/>
<dbReference type="FunCoup" id="Q2NM15">
    <property type="interactions" value="731"/>
</dbReference>
<dbReference type="STRING" id="4577.Q2NM15"/>
<dbReference type="PaxDb" id="4577-GRMZM2G179092_P01"/>
<dbReference type="EnsemblPlants" id="Zm00001eb415160_T001">
    <property type="protein sequence ID" value="Zm00001eb415160_P001"/>
    <property type="gene ID" value="Zm00001eb415160"/>
</dbReference>
<dbReference type="GeneID" id="732751"/>
<dbReference type="Gramene" id="Zm00001eb415160_T001">
    <property type="protein sequence ID" value="Zm00001eb415160_P001"/>
    <property type="gene ID" value="Zm00001eb415160"/>
</dbReference>
<dbReference type="KEGG" id="zma:732751"/>
<dbReference type="MaizeGDB" id="1219901"/>
<dbReference type="eggNOG" id="ENOG502QUCN">
    <property type="taxonomic scope" value="Eukaryota"/>
</dbReference>
<dbReference type="HOGENOM" id="CLU_003125_7_2_1"/>
<dbReference type="InParanoid" id="Q2NM15"/>
<dbReference type="OrthoDB" id="1877784at2759"/>
<dbReference type="BioCyc" id="MetaCyc:MONOMER-12833"/>
<dbReference type="BRENDA" id="4.2.3.47">
    <property type="organism ID" value="6752"/>
</dbReference>
<dbReference type="BRENDA" id="4.2.3.81">
    <property type="organism ID" value="6752"/>
</dbReference>
<dbReference type="UniPathway" id="UPA00213"/>
<dbReference type="Proteomes" id="UP000007305">
    <property type="component" value="Chromosome 10"/>
</dbReference>
<dbReference type="ExpressionAtlas" id="Q2NM15">
    <property type="expression patterns" value="baseline and differential"/>
</dbReference>
<dbReference type="GO" id="GO:0005737">
    <property type="term" value="C:cytoplasm"/>
    <property type="evidence" value="ECO:0007669"/>
    <property type="project" value="UniProtKB-SubCell"/>
</dbReference>
<dbReference type="GO" id="GO:0080016">
    <property type="term" value="F:(-)-E-beta-caryophyllene synthase activity"/>
    <property type="evidence" value="ECO:0007669"/>
    <property type="project" value="UniProtKB-EC"/>
</dbReference>
<dbReference type="GO" id="GO:0102877">
    <property type="term" value="F:alpha-copaene synthase activity"/>
    <property type="evidence" value="ECO:0007669"/>
    <property type="project" value="UniProtKB-EC"/>
</dbReference>
<dbReference type="GO" id="GO:0102884">
    <property type="term" value="F:alpha-zingiberene synthase activity"/>
    <property type="evidence" value="ECO:0007669"/>
    <property type="project" value="UniProtKB-EC"/>
</dbReference>
<dbReference type="GO" id="GO:0102887">
    <property type="term" value="F:beta-sesquiphellandrene synthase activity"/>
    <property type="evidence" value="ECO:0007669"/>
    <property type="project" value="UniProtKB-EC"/>
</dbReference>
<dbReference type="GO" id="GO:0000287">
    <property type="term" value="F:magnesium ion binding"/>
    <property type="evidence" value="ECO:0007669"/>
    <property type="project" value="InterPro"/>
</dbReference>
<dbReference type="GO" id="GO:0006952">
    <property type="term" value="P:defense response"/>
    <property type="evidence" value="ECO:0007669"/>
    <property type="project" value="UniProtKB-KW"/>
</dbReference>
<dbReference type="GO" id="GO:0016102">
    <property type="term" value="P:diterpenoid biosynthetic process"/>
    <property type="evidence" value="ECO:0007669"/>
    <property type="project" value="InterPro"/>
</dbReference>
<dbReference type="CDD" id="cd00684">
    <property type="entry name" value="Terpene_cyclase_plant_C1"/>
    <property type="match status" value="1"/>
</dbReference>
<dbReference type="FunFam" id="1.10.600.10:FF:000007">
    <property type="entry name" value="Isoprene synthase, chloroplastic"/>
    <property type="match status" value="1"/>
</dbReference>
<dbReference type="Gene3D" id="1.10.600.10">
    <property type="entry name" value="Farnesyl Diphosphate Synthase"/>
    <property type="match status" value="1"/>
</dbReference>
<dbReference type="Gene3D" id="1.50.10.130">
    <property type="entry name" value="Terpene synthase, N-terminal domain"/>
    <property type="match status" value="1"/>
</dbReference>
<dbReference type="InterPro" id="IPR008949">
    <property type="entry name" value="Isoprenoid_synthase_dom_sf"/>
</dbReference>
<dbReference type="InterPro" id="IPR034741">
    <property type="entry name" value="Terpene_cyclase-like_1_C"/>
</dbReference>
<dbReference type="InterPro" id="IPR044814">
    <property type="entry name" value="Terpene_cyclase_plant_C1"/>
</dbReference>
<dbReference type="InterPro" id="IPR001906">
    <property type="entry name" value="Terpene_synth_N"/>
</dbReference>
<dbReference type="InterPro" id="IPR036965">
    <property type="entry name" value="Terpene_synth_N_sf"/>
</dbReference>
<dbReference type="InterPro" id="IPR050148">
    <property type="entry name" value="Terpene_synthase-like"/>
</dbReference>
<dbReference type="InterPro" id="IPR005630">
    <property type="entry name" value="Terpene_synthase_metal-bd"/>
</dbReference>
<dbReference type="InterPro" id="IPR008930">
    <property type="entry name" value="Terpenoid_cyclase/PrenylTrfase"/>
</dbReference>
<dbReference type="PANTHER" id="PTHR31225:SF118">
    <property type="entry name" value="(E)-BETA-FARNESENE SYNTHASE"/>
    <property type="match status" value="1"/>
</dbReference>
<dbReference type="PANTHER" id="PTHR31225">
    <property type="entry name" value="OS04G0344100 PROTEIN-RELATED"/>
    <property type="match status" value="1"/>
</dbReference>
<dbReference type="Pfam" id="PF01397">
    <property type="entry name" value="Terpene_synth"/>
    <property type="match status" value="1"/>
</dbReference>
<dbReference type="Pfam" id="PF03936">
    <property type="entry name" value="Terpene_synth_C"/>
    <property type="match status" value="1"/>
</dbReference>
<dbReference type="SFLD" id="SFLDS00005">
    <property type="entry name" value="Isoprenoid_Synthase_Type_I"/>
    <property type="match status" value="1"/>
</dbReference>
<dbReference type="SFLD" id="SFLDG01019">
    <property type="entry name" value="Terpene_Cyclase_Like_1_C_Termi"/>
    <property type="match status" value="1"/>
</dbReference>
<dbReference type="SUPFAM" id="SSF48239">
    <property type="entry name" value="Terpenoid cyclases/Protein prenyltransferases"/>
    <property type="match status" value="1"/>
</dbReference>
<dbReference type="SUPFAM" id="SSF48576">
    <property type="entry name" value="Terpenoid synthases"/>
    <property type="match status" value="1"/>
</dbReference>
<gene>
    <name evidence="11" type="primary">TPS10</name>
</gene>
<sequence length="533" mass="61534">MDATAFHPSLWGDFFVKYKPPTAPKRGHMTERAELLKEEVRKTLKAAANQITNALDLIITLQRLGLDHHYENEISELLRFVYSSSDYDDKDLYVVSLRFYLLRKHGHCVSSDVFTSFKDEEGNFVVDDTKCLLSLYNAAYVRTHGEKVLDEAITFTRRQLEASLLDPLEPALADEVHLTLQTPLFRRLRILEAINYIPIYGKEAGRNEAILELAKLNFNLAQLIYCEELKEVTLWWKQLNVETNLSFIRDRIVECHFWMTGACCEPQYSLSRVIATKMTALITVLDDMMDTYSTTEEAMLLAEAIYRWEENAAELLPRYMKDFYLYLLKTIDSCGDELGPNRSFRTFYLKEMLKVLVRGSSQEIKWRNENYVPKTISEHLEHSGPTVGAFQVACSSFVGMGDSITKESFEWLLTYPELAKSLMNISRLLNDTASTKREQNAGQHVSTVQCYMLKHGTTMDEACEKIKELTEDSWKDMMELYLTPTEHPKLIAQTIVDFARTADYMYKETDGFTFSHTIKDMIAKLFVDPISLF</sequence>
<name>FARS_MAIZE</name>
<comment type="function">
    <text evidence="6 8 9">Sesquiterpene cyclase catalyzing mainly the production of beta-farnesene and alpha-bergamotene in equal amounts from farnesyl diphosphate (PubMed:16418295, PubMed:19646721, PubMed:21607717). Also mediates the biosynthesis of minor sesquiterpene hydrocarbons including alpha-muurolene, beta-bisabolene, zingiberene, sesquiphellandrene, sesquisabinene A, germacrene D, delta-cadinene, alpha-copaene and (E)-beta-caryophyllene (PubMed:16418295, PubMed:19646721). Involved in indirect defense by producing volatile signals attracting natural enemies of herbivores (PubMed:16418295, PubMed:19646721, PubMed:21607717).</text>
</comment>
<comment type="catalytic activity">
    <reaction evidence="6 8 9">
        <text>(2E,6E)-farnesyl diphosphate = (E)-beta-farnesene + diphosphate</text>
        <dbReference type="Rhea" id="RHEA:27425"/>
        <dbReference type="ChEBI" id="CHEBI:10418"/>
        <dbReference type="ChEBI" id="CHEBI:33019"/>
        <dbReference type="ChEBI" id="CHEBI:175763"/>
        <dbReference type="EC" id="4.2.3.47"/>
    </reaction>
    <physiologicalReaction direction="left-to-right" evidence="6 8 9">
        <dbReference type="Rhea" id="RHEA:27426"/>
    </physiologicalReaction>
</comment>
<comment type="catalytic activity">
    <reaction evidence="6">
        <text>(2E,6E)-farnesyl diphosphate = alpha-copaene + diphosphate</text>
        <dbReference type="Rhea" id="RHEA:33991"/>
        <dbReference type="ChEBI" id="CHEBI:10221"/>
        <dbReference type="ChEBI" id="CHEBI:33019"/>
        <dbReference type="ChEBI" id="CHEBI:175763"/>
        <dbReference type="EC" id="4.2.3.133"/>
    </reaction>
    <physiologicalReaction direction="left-to-right" evidence="6">
        <dbReference type="Rhea" id="RHEA:33992"/>
    </physiologicalReaction>
</comment>
<comment type="catalytic activity">
    <reaction evidence="6 8 9">
        <text>(2E,6E)-farnesyl diphosphate = (1S,5S,6R)-alpha-bergamotene + diphosphate</text>
        <dbReference type="Rhea" id="RHEA:31427"/>
        <dbReference type="ChEBI" id="CHEBI:33019"/>
        <dbReference type="ChEBI" id="CHEBI:62756"/>
        <dbReference type="ChEBI" id="CHEBI:175763"/>
        <dbReference type="EC" id="4.2.3.81"/>
    </reaction>
    <physiologicalReaction direction="left-to-right" evidence="6 8 9">
        <dbReference type="Rhea" id="RHEA:31428"/>
    </physiologicalReaction>
</comment>
<comment type="catalytic activity">
    <reaction evidence="6">
        <text>(2E,6E)-farnesyl diphosphate = (-)-(E)-beta-caryophyllene + diphosphate</text>
        <dbReference type="Rhea" id="RHEA:28294"/>
        <dbReference type="ChEBI" id="CHEBI:10357"/>
        <dbReference type="ChEBI" id="CHEBI:33019"/>
        <dbReference type="ChEBI" id="CHEBI:175763"/>
        <dbReference type="EC" id="4.2.3.57"/>
    </reaction>
    <physiologicalReaction direction="left-to-right" evidence="6">
        <dbReference type="Rhea" id="RHEA:28295"/>
    </physiologicalReaction>
</comment>
<comment type="catalytic activity">
    <reaction evidence="6">
        <text>(2E,6E)-farnesyl diphosphate = delta-cadinene + diphosphate</text>
        <dbReference type="Rhea" id="RHEA:56556"/>
        <dbReference type="ChEBI" id="CHEBI:33019"/>
        <dbReference type="ChEBI" id="CHEBI:140564"/>
        <dbReference type="ChEBI" id="CHEBI:175763"/>
    </reaction>
    <physiologicalReaction direction="left-to-right" evidence="6">
        <dbReference type="Rhea" id="RHEA:56557"/>
    </physiologicalReaction>
</comment>
<comment type="catalytic activity">
    <reaction evidence="6">
        <text>(2E,6E)-farnesyl diphosphate = (+)-germacrene D + diphosphate</text>
        <dbReference type="Rhea" id="RHEA:30427"/>
        <dbReference type="ChEBI" id="CHEBI:33019"/>
        <dbReference type="ChEBI" id="CHEBI:49046"/>
        <dbReference type="ChEBI" id="CHEBI:175763"/>
        <dbReference type="EC" id="4.2.3.77"/>
    </reaction>
    <physiologicalReaction direction="left-to-right" evidence="6">
        <dbReference type="Rhea" id="RHEA:30428"/>
    </physiologicalReaction>
</comment>
<comment type="catalytic activity">
    <reaction evidence="6 8">
        <text>(2E,6E)-farnesyl diphosphate = alpha-zingiberene + diphosphate</text>
        <dbReference type="Rhea" id="RHEA:28643"/>
        <dbReference type="ChEBI" id="CHEBI:10115"/>
        <dbReference type="ChEBI" id="CHEBI:33019"/>
        <dbReference type="ChEBI" id="CHEBI:175763"/>
        <dbReference type="EC" id="4.2.3.65"/>
    </reaction>
    <physiologicalReaction direction="left-to-right" evidence="6 8">
        <dbReference type="Rhea" id="RHEA:28644"/>
    </physiologicalReaction>
</comment>
<comment type="catalytic activity">
    <reaction evidence="6">
        <text>(2E,6E)-farnesyl diphosphate = alpha-muurolene + diphosphate</text>
        <dbReference type="Rhea" id="RHEA:33103"/>
        <dbReference type="ChEBI" id="CHEBI:33019"/>
        <dbReference type="ChEBI" id="CHEBI:64797"/>
        <dbReference type="ChEBI" id="CHEBI:175763"/>
        <dbReference type="EC" id="4.2.3.125"/>
    </reaction>
    <physiologicalReaction direction="left-to-right" evidence="6">
        <dbReference type="Rhea" id="RHEA:33104"/>
    </physiologicalReaction>
</comment>
<comment type="catalytic activity">
    <reaction evidence="6 8">
        <text>(2E,6E)-farnesyl diphosphate = (S)-beta-bisabolene + diphosphate</text>
        <dbReference type="Rhea" id="RHEA:28266"/>
        <dbReference type="ChEBI" id="CHEBI:33019"/>
        <dbReference type="ChEBI" id="CHEBI:49263"/>
        <dbReference type="ChEBI" id="CHEBI:175763"/>
        <dbReference type="EC" id="4.2.3.55"/>
    </reaction>
    <physiologicalReaction direction="left-to-right" evidence="6 8">
        <dbReference type="Rhea" id="RHEA:28267"/>
    </physiologicalReaction>
</comment>
<comment type="catalytic activity">
    <reaction evidence="6 8">
        <text>(2E,6E)-farnesyl diphosphate = beta-sesquiphellandrene + diphosphate</text>
        <dbReference type="Rhea" id="RHEA:32699"/>
        <dbReference type="ChEBI" id="CHEBI:33019"/>
        <dbReference type="ChEBI" id="CHEBI:64361"/>
        <dbReference type="ChEBI" id="CHEBI:175763"/>
        <dbReference type="EC" id="4.2.3.123"/>
    </reaction>
    <physiologicalReaction direction="left-to-right" evidence="6 8">
        <dbReference type="Rhea" id="RHEA:32700"/>
    </physiologicalReaction>
</comment>
<comment type="catalytic activity">
    <reaction evidence="6 8">
        <text>(2E,6E)-farnesyl diphosphate = sesquisabinene A + diphosphate</text>
        <dbReference type="Rhea" id="RHEA:60020"/>
        <dbReference type="ChEBI" id="CHEBI:33019"/>
        <dbReference type="ChEBI" id="CHEBI:143551"/>
        <dbReference type="ChEBI" id="CHEBI:175763"/>
    </reaction>
    <physiologicalReaction direction="left-to-right" evidence="6 8">
        <dbReference type="Rhea" id="RHEA:60021"/>
    </physiologicalReaction>
</comment>
<comment type="cofactor">
    <cofactor evidence="4">
        <name>Mg(2+)</name>
        <dbReference type="ChEBI" id="CHEBI:18420"/>
    </cofactor>
    <cofactor evidence="4">
        <name>Mn(2+)</name>
        <dbReference type="ChEBI" id="CHEBI:29035"/>
    </cofactor>
    <text evidence="3">Binds 3 Mg(2+) or Mn(2+) ions per subunit.</text>
</comment>
<comment type="pathway">
    <text evidence="6 8 9 13">Secondary metabolite biosynthesis; terpenoid biosynthesis.</text>
</comment>
<comment type="subunit">
    <text evidence="4">Monomer.</text>
</comment>
<comment type="subcellular location">
    <subcellularLocation>
        <location evidence="5">Cytoplasm</location>
    </subcellularLocation>
</comment>
<comment type="induction">
    <text evidence="6 7">Induced in leaves by herbivory (e.g. S.littoralis).</text>
</comment>
<comment type="domain">
    <text evidence="1">The Asp-Asp-Xaa-Xaa-Asp/Glu (DDXXD/E) motif is important for the catalytic activity, presumably through binding to Mg(2+).</text>
</comment>
<comment type="similarity">
    <text evidence="12">Belongs to the terpene synthase family.</text>
</comment>
<keyword id="KW-0963">Cytoplasm</keyword>
<keyword id="KW-0456">Lyase</keyword>
<keyword id="KW-0460">Magnesium</keyword>
<keyword id="KW-0464">Manganese</keyword>
<keyword id="KW-0479">Metal-binding</keyword>
<keyword id="KW-0611">Plant defense</keyword>
<keyword id="KW-1185">Reference proteome</keyword>
<protein>
    <recommendedName>
        <fullName evidence="11">(E)-beta-farnesene synthase</fullName>
        <ecNumber evidence="6 8 9">4.2.3.47</ecNumber>
    </recommendedName>
    <alternativeName>
        <fullName evidence="10">(+)-germacrene D synthase</fullName>
        <ecNumber evidence="6">4.2.3.77</ecNumber>
    </alternativeName>
    <alternativeName>
        <fullName evidence="10">(E)-alpha-bergamotene synthase</fullName>
        <ecNumber evidence="6 8 9">4.2.3.81</ecNumber>
    </alternativeName>
    <alternativeName>
        <fullName evidence="10">Alpha-copaene synthase</fullName>
        <ecNumber evidence="6">4.2.3.133</ecNumber>
    </alternativeName>
    <alternativeName>
        <fullName evidence="10">Alpha-muurolene synthase</fullName>
        <ecNumber evidence="6">4.2.3.125</ecNumber>
    </alternativeName>
    <alternativeName>
        <fullName evidence="10">Beta-bisabolene synthase</fullName>
        <ecNumber evidence="6 8">4.2.3.55</ecNumber>
    </alternativeName>
    <alternativeName>
        <fullName evidence="10">Beta-caryophyllene synthase</fullName>
        <ecNumber evidence="6">4.2.3.57</ecNumber>
    </alternativeName>
    <alternativeName>
        <fullName evidence="10">Delta-cadinene synthase</fullName>
        <ecNumber evidence="6">4.2.3.-</ecNumber>
    </alternativeName>
    <alternativeName>
        <fullName evidence="10">Sesquiphellandrene synthase</fullName>
        <ecNumber evidence="6 8">4.2.3.123</ecNumber>
    </alternativeName>
    <alternativeName>
        <fullName evidence="10">Sesquisabinene A synthase</fullName>
        <ecNumber evidence="6 8">4.2.3.-</ecNumber>
    </alternativeName>
    <alternativeName>
        <fullName evidence="11">Terpene synthase 10</fullName>
    </alternativeName>
    <alternativeName>
        <fullName evidence="10">Zingiberene synthase</fullName>
        <ecNumber evidence="6 8">4.2.3.65</ecNumber>
    </alternativeName>
</protein>
<accession>Q2NM15</accession>
<accession>Q2NM14</accession>
<organism>
    <name type="scientific">Zea mays</name>
    <name type="common">Maize</name>
    <dbReference type="NCBI Taxonomy" id="4577"/>
    <lineage>
        <taxon>Eukaryota</taxon>
        <taxon>Viridiplantae</taxon>
        <taxon>Streptophyta</taxon>
        <taxon>Embryophyta</taxon>
        <taxon>Tracheophyta</taxon>
        <taxon>Spermatophyta</taxon>
        <taxon>Magnoliopsida</taxon>
        <taxon>Liliopsida</taxon>
        <taxon>Poales</taxon>
        <taxon>Poaceae</taxon>
        <taxon>PACMAD clade</taxon>
        <taxon>Panicoideae</taxon>
        <taxon>Andropogonodae</taxon>
        <taxon>Andropogoneae</taxon>
        <taxon>Tripsacinae</taxon>
        <taxon>Zea</taxon>
    </lineage>
</organism>